<name>RL24_STRPB</name>
<organism>
    <name type="scientific">Streptococcus pyogenes serotype M12 (strain MGAS2096)</name>
    <dbReference type="NCBI Taxonomy" id="370553"/>
    <lineage>
        <taxon>Bacteria</taxon>
        <taxon>Bacillati</taxon>
        <taxon>Bacillota</taxon>
        <taxon>Bacilli</taxon>
        <taxon>Lactobacillales</taxon>
        <taxon>Streptococcaceae</taxon>
        <taxon>Streptococcus</taxon>
    </lineage>
</organism>
<accession>Q1JE47</accession>
<gene>
    <name evidence="1" type="primary">rplX</name>
    <name type="ordered locus">MGAS2096_Spy0059</name>
</gene>
<evidence type="ECO:0000255" key="1">
    <source>
        <dbReference type="HAMAP-Rule" id="MF_01326"/>
    </source>
</evidence>
<evidence type="ECO:0000305" key="2"/>
<protein>
    <recommendedName>
        <fullName evidence="1">Large ribosomal subunit protein uL24</fullName>
    </recommendedName>
    <alternativeName>
        <fullName evidence="2">50S ribosomal protein L24</fullName>
    </alternativeName>
</protein>
<sequence>MFVKKGDKVRVIAGKDKGTEAVVLKALPKVNKVIVEGVGMIKKHQKPNTENPQGAIVEKEAPIHVSNVQVLDKNGVAGRVGYKVVDGKKVRYSKKSGEVLD</sequence>
<comment type="function">
    <text evidence="1">One of two assembly initiator proteins, it binds directly to the 5'-end of the 23S rRNA, where it nucleates assembly of the 50S subunit.</text>
</comment>
<comment type="function">
    <text evidence="1">One of the proteins that surrounds the polypeptide exit tunnel on the outside of the subunit.</text>
</comment>
<comment type="subunit">
    <text evidence="1">Part of the 50S ribosomal subunit.</text>
</comment>
<comment type="similarity">
    <text evidence="1">Belongs to the universal ribosomal protein uL24 family.</text>
</comment>
<reference key="1">
    <citation type="journal article" date="2006" name="Proc. Natl. Acad. Sci. U.S.A.">
        <title>Molecular genetic anatomy of inter- and intraserotype variation in the human bacterial pathogen group A Streptococcus.</title>
        <authorList>
            <person name="Beres S.B."/>
            <person name="Richter E.W."/>
            <person name="Nagiec M.J."/>
            <person name="Sumby P."/>
            <person name="Porcella S.F."/>
            <person name="DeLeo F.R."/>
            <person name="Musser J.M."/>
        </authorList>
    </citation>
    <scope>NUCLEOTIDE SEQUENCE [LARGE SCALE GENOMIC DNA]</scope>
    <source>
        <strain>MGAS2096</strain>
    </source>
</reference>
<proteinExistence type="inferred from homology"/>
<feature type="chain" id="PRO_1000052320" description="Large ribosomal subunit protein uL24">
    <location>
        <begin position="1"/>
        <end position="101"/>
    </location>
</feature>
<keyword id="KW-0687">Ribonucleoprotein</keyword>
<keyword id="KW-0689">Ribosomal protein</keyword>
<keyword id="KW-0694">RNA-binding</keyword>
<keyword id="KW-0699">rRNA-binding</keyword>
<dbReference type="EMBL" id="CP000261">
    <property type="protein sequence ID" value="ABF35111.1"/>
    <property type="molecule type" value="Genomic_DNA"/>
</dbReference>
<dbReference type="SMR" id="Q1JE47"/>
<dbReference type="KEGG" id="spj:MGAS2096_Spy0059"/>
<dbReference type="HOGENOM" id="CLU_093315_2_0_9"/>
<dbReference type="GO" id="GO:1990904">
    <property type="term" value="C:ribonucleoprotein complex"/>
    <property type="evidence" value="ECO:0007669"/>
    <property type="project" value="UniProtKB-KW"/>
</dbReference>
<dbReference type="GO" id="GO:0005840">
    <property type="term" value="C:ribosome"/>
    <property type="evidence" value="ECO:0007669"/>
    <property type="project" value="UniProtKB-KW"/>
</dbReference>
<dbReference type="GO" id="GO:0019843">
    <property type="term" value="F:rRNA binding"/>
    <property type="evidence" value="ECO:0007669"/>
    <property type="project" value="UniProtKB-UniRule"/>
</dbReference>
<dbReference type="GO" id="GO:0003735">
    <property type="term" value="F:structural constituent of ribosome"/>
    <property type="evidence" value="ECO:0007669"/>
    <property type="project" value="InterPro"/>
</dbReference>
<dbReference type="GO" id="GO:0006412">
    <property type="term" value="P:translation"/>
    <property type="evidence" value="ECO:0007669"/>
    <property type="project" value="UniProtKB-UniRule"/>
</dbReference>
<dbReference type="CDD" id="cd06089">
    <property type="entry name" value="KOW_RPL26"/>
    <property type="match status" value="1"/>
</dbReference>
<dbReference type="FunFam" id="2.30.30.30:FF:000004">
    <property type="entry name" value="50S ribosomal protein L24"/>
    <property type="match status" value="1"/>
</dbReference>
<dbReference type="Gene3D" id="2.30.30.30">
    <property type="match status" value="1"/>
</dbReference>
<dbReference type="HAMAP" id="MF_01326_B">
    <property type="entry name" value="Ribosomal_uL24_B"/>
    <property type="match status" value="1"/>
</dbReference>
<dbReference type="InterPro" id="IPR005824">
    <property type="entry name" value="KOW"/>
</dbReference>
<dbReference type="InterPro" id="IPR014722">
    <property type="entry name" value="Rib_uL2_dom2"/>
</dbReference>
<dbReference type="InterPro" id="IPR003256">
    <property type="entry name" value="Ribosomal_uL24"/>
</dbReference>
<dbReference type="InterPro" id="IPR005825">
    <property type="entry name" value="Ribosomal_uL24_CS"/>
</dbReference>
<dbReference type="InterPro" id="IPR041988">
    <property type="entry name" value="Ribosomal_uL24_KOW"/>
</dbReference>
<dbReference type="InterPro" id="IPR008991">
    <property type="entry name" value="Translation_prot_SH3-like_sf"/>
</dbReference>
<dbReference type="NCBIfam" id="TIGR01079">
    <property type="entry name" value="rplX_bact"/>
    <property type="match status" value="1"/>
</dbReference>
<dbReference type="PANTHER" id="PTHR12903">
    <property type="entry name" value="MITOCHONDRIAL RIBOSOMAL PROTEIN L24"/>
    <property type="match status" value="1"/>
</dbReference>
<dbReference type="Pfam" id="PF00467">
    <property type="entry name" value="KOW"/>
    <property type="match status" value="1"/>
</dbReference>
<dbReference type="Pfam" id="PF17136">
    <property type="entry name" value="ribosomal_L24"/>
    <property type="match status" value="1"/>
</dbReference>
<dbReference type="SMART" id="SM00739">
    <property type="entry name" value="KOW"/>
    <property type="match status" value="1"/>
</dbReference>
<dbReference type="SUPFAM" id="SSF50104">
    <property type="entry name" value="Translation proteins SH3-like domain"/>
    <property type="match status" value="1"/>
</dbReference>
<dbReference type="PROSITE" id="PS01108">
    <property type="entry name" value="RIBOSOMAL_L24"/>
    <property type="match status" value="1"/>
</dbReference>